<accession>Q8DES7</accession>
<evidence type="ECO:0000255" key="1">
    <source>
        <dbReference type="HAMAP-Rule" id="MF_02002"/>
    </source>
</evidence>
<comment type="function">
    <text evidence="1">Catalyzes the attachment of isoleucine to tRNA(Ile). As IleRS can inadvertently accommodate and process structurally similar amino acids such as valine, to avoid such errors it has two additional distinct tRNA(Ile)-dependent editing activities. One activity is designated as 'pretransfer' editing and involves the hydrolysis of activated Val-AMP. The other activity is designated 'posttransfer' editing and involves deacylation of mischarged Val-tRNA(Ile).</text>
</comment>
<comment type="catalytic activity">
    <reaction evidence="1">
        <text>tRNA(Ile) + L-isoleucine + ATP = L-isoleucyl-tRNA(Ile) + AMP + diphosphate</text>
        <dbReference type="Rhea" id="RHEA:11060"/>
        <dbReference type="Rhea" id="RHEA-COMP:9666"/>
        <dbReference type="Rhea" id="RHEA-COMP:9695"/>
        <dbReference type="ChEBI" id="CHEBI:30616"/>
        <dbReference type="ChEBI" id="CHEBI:33019"/>
        <dbReference type="ChEBI" id="CHEBI:58045"/>
        <dbReference type="ChEBI" id="CHEBI:78442"/>
        <dbReference type="ChEBI" id="CHEBI:78528"/>
        <dbReference type="ChEBI" id="CHEBI:456215"/>
        <dbReference type="EC" id="6.1.1.5"/>
    </reaction>
</comment>
<comment type="cofactor">
    <cofactor evidence="1">
        <name>Zn(2+)</name>
        <dbReference type="ChEBI" id="CHEBI:29105"/>
    </cofactor>
    <text evidence="1">Binds 1 zinc ion per subunit.</text>
</comment>
<comment type="subunit">
    <text evidence="1">Monomer.</text>
</comment>
<comment type="subcellular location">
    <subcellularLocation>
        <location evidence="1">Cytoplasm</location>
    </subcellularLocation>
</comment>
<comment type="domain">
    <text evidence="1">IleRS has two distinct active sites: one for aminoacylation and one for editing. The misactivated valine is translocated from the active site to the editing site, which sterically excludes the correctly activated isoleucine. The single editing site contains two valyl binding pockets, one specific for each substrate (Val-AMP or Val-tRNA(Ile)).</text>
</comment>
<comment type="similarity">
    <text evidence="1">Belongs to the class-I aminoacyl-tRNA synthetase family. IleS type 1 subfamily.</text>
</comment>
<organism>
    <name type="scientific">Vibrio vulnificus (strain CMCP6)</name>
    <dbReference type="NCBI Taxonomy" id="216895"/>
    <lineage>
        <taxon>Bacteria</taxon>
        <taxon>Pseudomonadati</taxon>
        <taxon>Pseudomonadota</taxon>
        <taxon>Gammaproteobacteria</taxon>
        <taxon>Vibrionales</taxon>
        <taxon>Vibrionaceae</taxon>
        <taxon>Vibrio</taxon>
    </lineage>
</organism>
<name>SYI_VIBVU</name>
<keyword id="KW-0030">Aminoacyl-tRNA synthetase</keyword>
<keyword id="KW-0067">ATP-binding</keyword>
<keyword id="KW-0963">Cytoplasm</keyword>
<keyword id="KW-0436">Ligase</keyword>
<keyword id="KW-0479">Metal-binding</keyword>
<keyword id="KW-0547">Nucleotide-binding</keyword>
<keyword id="KW-0648">Protein biosynthesis</keyword>
<keyword id="KW-0862">Zinc</keyword>
<gene>
    <name evidence="1" type="primary">ileS</name>
    <name type="ordered locus">VV1_0507</name>
</gene>
<feature type="chain" id="PRO_0000098500" description="Isoleucine--tRNA ligase">
    <location>
        <begin position="1"/>
        <end position="948"/>
    </location>
</feature>
<feature type="short sequence motif" description="'HIGH' region">
    <location>
        <begin position="58"/>
        <end position="68"/>
    </location>
</feature>
<feature type="short sequence motif" description="'KMSKS' region">
    <location>
        <begin position="607"/>
        <end position="611"/>
    </location>
</feature>
<feature type="binding site" evidence="1">
    <location>
        <position position="566"/>
    </location>
    <ligand>
        <name>L-isoleucyl-5'-AMP</name>
        <dbReference type="ChEBI" id="CHEBI:178002"/>
    </ligand>
</feature>
<feature type="binding site" evidence="1">
    <location>
        <position position="610"/>
    </location>
    <ligand>
        <name>ATP</name>
        <dbReference type="ChEBI" id="CHEBI:30616"/>
    </ligand>
</feature>
<feature type="binding site" evidence="1">
    <location>
        <position position="911"/>
    </location>
    <ligand>
        <name>Zn(2+)</name>
        <dbReference type="ChEBI" id="CHEBI:29105"/>
    </ligand>
</feature>
<feature type="binding site" evidence="1">
    <location>
        <position position="914"/>
    </location>
    <ligand>
        <name>Zn(2+)</name>
        <dbReference type="ChEBI" id="CHEBI:29105"/>
    </ligand>
</feature>
<feature type="binding site" evidence="1">
    <location>
        <position position="931"/>
    </location>
    <ligand>
        <name>Zn(2+)</name>
        <dbReference type="ChEBI" id="CHEBI:29105"/>
    </ligand>
</feature>
<feature type="binding site" evidence="1">
    <location>
        <position position="934"/>
    </location>
    <ligand>
        <name>Zn(2+)</name>
        <dbReference type="ChEBI" id="CHEBI:29105"/>
    </ligand>
</feature>
<protein>
    <recommendedName>
        <fullName evidence="1">Isoleucine--tRNA ligase</fullName>
        <ecNumber evidence="1">6.1.1.5</ecNumber>
    </recommendedName>
    <alternativeName>
        <fullName evidence="1">Isoleucyl-tRNA synthetase</fullName>
        <shortName evidence="1">IleRS</shortName>
    </alternativeName>
</protein>
<proteinExistence type="inferred from homology"/>
<reference key="1">
    <citation type="submission" date="2002-12" db="EMBL/GenBank/DDBJ databases">
        <title>Complete genome sequence of Vibrio vulnificus CMCP6.</title>
        <authorList>
            <person name="Rhee J.H."/>
            <person name="Kim S.Y."/>
            <person name="Chung S.S."/>
            <person name="Kim J.J."/>
            <person name="Moon Y.H."/>
            <person name="Jeong H."/>
            <person name="Choy H.E."/>
        </authorList>
    </citation>
    <scope>NUCLEOTIDE SEQUENCE [LARGE SCALE GENOMIC DNA]</scope>
    <source>
        <strain>CMCP6</strain>
    </source>
</reference>
<sequence length="948" mass="105823">MSEYKDTLNLPETGFPMRGDLAKREPEMLKRWYQEDLYGEIRKAKKGKKSFVLHDGPPYANGDIHIGHALNKILKDIIIKSKTLSGFDAPYVPGWDCHGLPIELMVEKKVGKPGQKVTAAEFREKCREYAAGQVEGQKESFKRLGIMGEWDKPYRTMDFTTEANIIRALGQIADNGHLLKGFKPVHWCTDCGSALAEAEVEYKNKVSPSIDVRFKAADEAALLAKFSLNEGHQGQGDVSIVIWTTTPWTLPANRAVCLRDDLEYVLIQVEGDNPERIIVAAELAKDVMDRAGIEHFHNLGFAKGADLELTQFQHPFYDFTVPAILGDHVTTDSGTGVVHTAPGHGQEDFAVGQKYNLEVANPVGSNGVYLPDTELFAGQHVFKANDAVVETLKEKGALLHHHAYEHSYPHCWRHKTPIIFRATPQWFVSMDQAGLRAKALESIKGVQWMPEWGQSRIEGMIEGRPEWCISRQRTWGVPIALFVHKETAELHPNTSELIEKVAQVVEQKGIQAWWDIDAAELLGDDAAQYEKVLDTLDVWFDSGVTHYAVVDKREEFNGAEADMYLEGSDQHRGWFQSSLISSIAMKGKAPYKQVLTHGFVVDGHGRKMSKSIGNVVAPKDVTNKLGADILRLWVASTDYTGEVAVSDEILKRSADAYRRIRNTARFFLANLNGFNPETDIVPVEEMVALDRWAVGRALAAQNEIVKAYDEYNTHAVTQRLMHFCSIEMGSFYLDVIKDRQYTAKLGGHAQRSCQTALYYIVEALVRWMAPIMSFTADEIWNQMPASLPSGESRDKFVFTGEWFDGLFGLAEGEELNNAFWSEMQKVRGAVNKLLEAARSDKTIGGSLQAELTLFADDALAAKINKLEDELRFVLLTSAATVKPLSEKSDAAQATDIEGLFVAVRATEAEKCDRCWHHTPDVGTIEGHEKICGRCVSNVDGEGEARKFA</sequence>
<dbReference type="EC" id="6.1.1.5" evidence="1"/>
<dbReference type="EMBL" id="AE016795">
    <property type="protein sequence ID" value="AAO09026.1"/>
    <property type="molecule type" value="Genomic_DNA"/>
</dbReference>
<dbReference type="RefSeq" id="WP_011078596.1">
    <property type="nucleotide sequence ID" value="NC_004459.3"/>
</dbReference>
<dbReference type="SMR" id="Q8DES7"/>
<dbReference type="KEGG" id="vvu:VV1_0507"/>
<dbReference type="HOGENOM" id="CLU_001493_7_1_6"/>
<dbReference type="Proteomes" id="UP000002275">
    <property type="component" value="Chromosome 1"/>
</dbReference>
<dbReference type="GO" id="GO:0005829">
    <property type="term" value="C:cytosol"/>
    <property type="evidence" value="ECO:0007669"/>
    <property type="project" value="TreeGrafter"/>
</dbReference>
<dbReference type="GO" id="GO:0002161">
    <property type="term" value="F:aminoacyl-tRNA deacylase activity"/>
    <property type="evidence" value="ECO:0007669"/>
    <property type="project" value="InterPro"/>
</dbReference>
<dbReference type="GO" id="GO:0005524">
    <property type="term" value="F:ATP binding"/>
    <property type="evidence" value="ECO:0007669"/>
    <property type="project" value="UniProtKB-UniRule"/>
</dbReference>
<dbReference type="GO" id="GO:0004822">
    <property type="term" value="F:isoleucine-tRNA ligase activity"/>
    <property type="evidence" value="ECO:0007669"/>
    <property type="project" value="UniProtKB-UniRule"/>
</dbReference>
<dbReference type="GO" id="GO:0000049">
    <property type="term" value="F:tRNA binding"/>
    <property type="evidence" value="ECO:0007669"/>
    <property type="project" value="InterPro"/>
</dbReference>
<dbReference type="GO" id="GO:0008270">
    <property type="term" value="F:zinc ion binding"/>
    <property type="evidence" value="ECO:0007669"/>
    <property type="project" value="UniProtKB-UniRule"/>
</dbReference>
<dbReference type="GO" id="GO:0006428">
    <property type="term" value="P:isoleucyl-tRNA aminoacylation"/>
    <property type="evidence" value="ECO:0007669"/>
    <property type="project" value="UniProtKB-UniRule"/>
</dbReference>
<dbReference type="CDD" id="cd07960">
    <property type="entry name" value="Anticodon_Ia_Ile_BEm"/>
    <property type="match status" value="1"/>
</dbReference>
<dbReference type="CDD" id="cd00818">
    <property type="entry name" value="IleRS_core"/>
    <property type="match status" value="1"/>
</dbReference>
<dbReference type="FunFam" id="1.10.730.20:FF:000001">
    <property type="entry name" value="Isoleucine--tRNA ligase"/>
    <property type="match status" value="1"/>
</dbReference>
<dbReference type="FunFam" id="3.40.50.620:FF:000048">
    <property type="entry name" value="Isoleucine--tRNA ligase"/>
    <property type="match status" value="1"/>
</dbReference>
<dbReference type="FunFam" id="3.40.50.620:FF:000168">
    <property type="entry name" value="Isoleucine--tRNA ligase"/>
    <property type="match status" value="1"/>
</dbReference>
<dbReference type="Gene3D" id="1.10.730.20">
    <property type="match status" value="1"/>
</dbReference>
<dbReference type="Gene3D" id="3.40.50.620">
    <property type="entry name" value="HUPs"/>
    <property type="match status" value="2"/>
</dbReference>
<dbReference type="Gene3D" id="1.10.10.830">
    <property type="entry name" value="Ile-tRNA synthetase CP2 domain-like"/>
    <property type="match status" value="1"/>
</dbReference>
<dbReference type="HAMAP" id="MF_02002">
    <property type="entry name" value="Ile_tRNA_synth_type1"/>
    <property type="match status" value="1"/>
</dbReference>
<dbReference type="InterPro" id="IPR001412">
    <property type="entry name" value="aa-tRNA-synth_I_CS"/>
</dbReference>
<dbReference type="InterPro" id="IPR002300">
    <property type="entry name" value="aa-tRNA-synth_Ia"/>
</dbReference>
<dbReference type="InterPro" id="IPR033708">
    <property type="entry name" value="Anticodon_Ile_BEm"/>
</dbReference>
<dbReference type="InterPro" id="IPR002301">
    <property type="entry name" value="Ile-tRNA-ligase"/>
</dbReference>
<dbReference type="InterPro" id="IPR023585">
    <property type="entry name" value="Ile-tRNA-ligase_type1"/>
</dbReference>
<dbReference type="InterPro" id="IPR050081">
    <property type="entry name" value="Ile-tRNA_ligase"/>
</dbReference>
<dbReference type="InterPro" id="IPR013155">
    <property type="entry name" value="M/V/L/I-tRNA-synth_anticd-bd"/>
</dbReference>
<dbReference type="InterPro" id="IPR014729">
    <property type="entry name" value="Rossmann-like_a/b/a_fold"/>
</dbReference>
<dbReference type="InterPro" id="IPR009080">
    <property type="entry name" value="tRNAsynth_Ia_anticodon-bd"/>
</dbReference>
<dbReference type="InterPro" id="IPR009008">
    <property type="entry name" value="Val/Leu/Ile-tRNA-synth_edit"/>
</dbReference>
<dbReference type="InterPro" id="IPR010663">
    <property type="entry name" value="Znf_FPG/IleRS"/>
</dbReference>
<dbReference type="NCBIfam" id="TIGR00392">
    <property type="entry name" value="ileS"/>
    <property type="match status" value="1"/>
</dbReference>
<dbReference type="PANTHER" id="PTHR42765:SF1">
    <property type="entry name" value="ISOLEUCINE--TRNA LIGASE, MITOCHONDRIAL"/>
    <property type="match status" value="1"/>
</dbReference>
<dbReference type="PANTHER" id="PTHR42765">
    <property type="entry name" value="SOLEUCYL-TRNA SYNTHETASE"/>
    <property type="match status" value="1"/>
</dbReference>
<dbReference type="Pfam" id="PF08264">
    <property type="entry name" value="Anticodon_1"/>
    <property type="match status" value="1"/>
</dbReference>
<dbReference type="Pfam" id="PF00133">
    <property type="entry name" value="tRNA-synt_1"/>
    <property type="match status" value="1"/>
</dbReference>
<dbReference type="Pfam" id="PF06827">
    <property type="entry name" value="zf-FPG_IleRS"/>
    <property type="match status" value="1"/>
</dbReference>
<dbReference type="PRINTS" id="PR00984">
    <property type="entry name" value="TRNASYNTHILE"/>
</dbReference>
<dbReference type="SUPFAM" id="SSF47323">
    <property type="entry name" value="Anticodon-binding domain of a subclass of class I aminoacyl-tRNA synthetases"/>
    <property type="match status" value="1"/>
</dbReference>
<dbReference type="SUPFAM" id="SSF52374">
    <property type="entry name" value="Nucleotidylyl transferase"/>
    <property type="match status" value="1"/>
</dbReference>
<dbReference type="SUPFAM" id="SSF50677">
    <property type="entry name" value="ValRS/IleRS/LeuRS editing domain"/>
    <property type="match status" value="1"/>
</dbReference>
<dbReference type="PROSITE" id="PS00178">
    <property type="entry name" value="AA_TRNA_LIGASE_I"/>
    <property type="match status" value="1"/>
</dbReference>